<dbReference type="EC" id="2.4.2.53" evidence="1"/>
<dbReference type="EMBL" id="AF336802">
    <property type="protein sequence ID" value="AAK69641.1"/>
    <property type="molecule type" value="Genomic_DNA"/>
</dbReference>
<dbReference type="EMBL" id="BX936398">
    <property type="protein sequence ID" value="CAH21567.1"/>
    <property type="molecule type" value="Genomic_DNA"/>
</dbReference>
<dbReference type="RefSeq" id="WP_011192543.1">
    <property type="nucleotide sequence ID" value="NZ_CP009712.1"/>
</dbReference>
<dbReference type="SMR" id="Q93PD9"/>
<dbReference type="CAZy" id="GT2">
    <property type="family name" value="Glycosyltransferase Family 2"/>
</dbReference>
<dbReference type="GeneID" id="49785666"/>
<dbReference type="KEGG" id="ypo:BZ17_125"/>
<dbReference type="KEGG" id="yps:YPTB2329"/>
<dbReference type="PATRIC" id="fig|273123.14.peg.134"/>
<dbReference type="BRENDA" id="2.4.2.53">
    <property type="organism ID" value="4560"/>
</dbReference>
<dbReference type="UniPathway" id="UPA00030"/>
<dbReference type="UniPathway" id="UPA00036">
    <property type="reaction ID" value="UER00495"/>
</dbReference>
<dbReference type="Proteomes" id="UP000001011">
    <property type="component" value="Chromosome"/>
</dbReference>
<dbReference type="GO" id="GO:0005886">
    <property type="term" value="C:plasma membrane"/>
    <property type="evidence" value="ECO:0007669"/>
    <property type="project" value="UniProtKB-SubCell"/>
</dbReference>
<dbReference type="GO" id="GO:0016780">
    <property type="term" value="F:phosphotransferase activity, for other substituted phosphate groups"/>
    <property type="evidence" value="ECO:0007669"/>
    <property type="project" value="UniProtKB-UniRule"/>
</dbReference>
<dbReference type="GO" id="GO:0099621">
    <property type="term" value="F:undecaprenyl-phosphate 4-deoxy-4-formamido-L-arabinose transferase activity"/>
    <property type="evidence" value="ECO:0007669"/>
    <property type="project" value="UniProtKB-EC"/>
</dbReference>
<dbReference type="GO" id="GO:0036108">
    <property type="term" value="P:4-amino-4-deoxy-alpha-L-arabinopyranosyl undecaprenyl phosphate biosynthetic process"/>
    <property type="evidence" value="ECO:0007669"/>
    <property type="project" value="UniProtKB-UniRule"/>
</dbReference>
<dbReference type="GO" id="GO:0009245">
    <property type="term" value="P:lipid A biosynthetic process"/>
    <property type="evidence" value="ECO:0007669"/>
    <property type="project" value="UniProtKB-UniRule"/>
</dbReference>
<dbReference type="GO" id="GO:0009103">
    <property type="term" value="P:lipopolysaccharide biosynthetic process"/>
    <property type="evidence" value="ECO:0007669"/>
    <property type="project" value="UniProtKB-UniRule"/>
</dbReference>
<dbReference type="GO" id="GO:0046677">
    <property type="term" value="P:response to antibiotic"/>
    <property type="evidence" value="ECO:0007669"/>
    <property type="project" value="UniProtKB-KW"/>
</dbReference>
<dbReference type="CDD" id="cd04187">
    <property type="entry name" value="DPM1_like_bac"/>
    <property type="match status" value="1"/>
</dbReference>
<dbReference type="FunFam" id="3.90.550.10:FF:000019">
    <property type="entry name" value="Undecaprenyl-phosphate 4-deoxy-4-formamido-L-arabinose transferase"/>
    <property type="match status" value="1"/>
</dbReference>
<dbReference type="Gene3D" id="3.90.550.10">
    <property type="entry name" value="Spore Coat Polysaccharide Biosynthesis Protein SpsA, Chain A"/>
    <property type="match status" value="1"/>
</dbReference>
<dbReference type="HAMAP" id="MF_01164">
    <property type="entry name" value="ArnC_transfer"/>
    <property type="match status" value="1"/>
</dbReference>
<dbReference type="InterPro" id="IPR022857">
    <property type="entry name" value="ArnC_tfrase"/>
</dbReference>
<dbReference type="InterPro" id="IPR001173">
    <property type="entry name" value="Glyco_trans_2-like"/>
</dbReference>
<dbReference type="InterPro" id="IPR050256">
    <property type="entry name" value="Glycosyltransferase_2"/>
</dbReference>
<dbReference type="InterPro" id="IPR029044">
    <property type="entry name" value="Nucleotide-diphossugar_trans"/>
</dbReference>
<dbReference type="NCBIfam" id="NF007986">
    <property type="entry name" value="PRK10714.1"/>
    <property type="match status" value="1"/>
</dbReference>
<dbReference type="PANTHER" id="PTHR48090:SF3">
    <property type="entry name" value="UNDECAPRENYL-PHOSPHATE 4-DEOXY-4-FORMAMIDO-L-ARABINOSE TRANSFERASE"/>
    <property type="match status" value="1"/>
</dbReference>
<dbReference type="PANTHER" id="PTHR48090">
    <property type="entry name" value="UNDECAPRENYL-PHOSPHATE 4-DEOXY-4-FORMAMIDO-L-ARABINOSE TRANSFERASE-RELATED"/>
    <property type="match status" value="1"/>
</dbReference>
<dbReference type="Pfam" id="PF00535">
    <property type="entry name" value="Glycos_transf_2"/>
    <property type="match status" value="1"/>
</dbReference>
<dbReference type="SUPFAM" id="SSF53448">
    <property type="entry name" value="Nucleotide-diphospho-sugar transferases"/>
    <property type="match status" value="1"/>
</dbReference>
<evidence type="ECO:0000255" key="1">
    <source>
        <dbReference type="HAMAP-Rule" id="MF_01164"/>
    </source>
</evidence>
<evidence type="ECO:0000269" key="2">
    <source>
    </source>
</evidence>
<name>ARNC_YERPS</name>
<reference key="1">
    <citation type="journal article" date="2004" name="Microbiology">
        <title>The pmrF polymyxin-resistance operon of Yersinia pseudotuberculosis is upregulated by the PhoP-PhoQ two-component system but not by PmrA-PmrB, and is not required for virulence.</title>
        <authorList>
            <person name="Marceau M.B."/>
            <person name="Sebbane F."/>
            <person name="Ewann F."/>
            <person name="Collyn F."/>
            <person name="Lindner B."/>
            <person name="Campos M.A."/>
            <person name="Bengoechea J.-A."/>
            <person name="Simonet M."/>
        </authorList>
    </citation>
    <scope>NUCLEOTIDE SEQUENCE [GENOMIC DNA]</scope>
    <scope>INDUCTION</scope>
    <source>
        <strain>32777 / IP2777 / Serotype O1:b</strain>
    </source>
</reference>
<reference key="2">
    <citation type="journal article" date="2004" name="Proc. Natl. Acad. Sci. U.S.A.">
        <title>Insights into the evolution of Yersinia pestis through whole-genome comparison with Yersinia pseudotuberculosis.</title>
        <authorList>
            <person name="Chain P.S.G."/>
            <person name="Carniel E."/>
            <person name="Larimer F.W."/>
            <person name="Lamerdin J."/>
            <person name="Stoutland P.O."/>
            <person name="Regala W.M."/>
            <person name="Georgescu A.M."/>
            <person name="Vergez L.M."/>
            <person name="Land M.L."/>
            <person name="Motin V.L."/>
            <person name="Brubaker R.R."/>
            <person name="Fowler J."/>
            <person name="Hinnebusch J."/>
            <person name="Marceau M."/>
            <person name="Medigue C."/>
            <person name="Simonet M."/>
            <person name="Chenal-Francisque V."/>
            <person name="Souza B."/>
            <person name="Dacheux D."/>
            <person name="Elliott J.M."/>
            <person name="Derbise A."/>
            <person name="Hauser L.J."/>
            <person name="Garcia E."/>
        </authorList>
    </citation>
    <scope>NUCLEOTIDE SEQUENCE [LARGE SCALE GENOMIC DNA]</scope>
    <source>
        <strain>IP32953</strain>
    </source>
</reference>
<keyword id="KW-0046">Antibiotic resistance</keyword>
<keyword id="KW-0997">Cell inner membrane</keyword>
<keyword id="KW-1003">Cell membrane</keyword>
<keyword id="KW-0328">Glycosyltransferase</keyword>
<keyword id="KW-0441">Lipid A biosynthesis</keyword>
<keyword id="KW-0444">Lipid biosynthesis</keyword>
<keyword id="KW-0443">Lipid metabolism</keyword>
<keyword id="KW-0448">Lipopolysaccharide biosynthesis</keyword>
<keyword id="KW-0472">Membrane</keyword>
<keyword id="KW-0808">Transferase</keyword>
<keyword id="KW-0812">Transmembrane</keyword>
<keyword id="KW-1133">Transmembrane helix</keyword>
<proteinExistence type="evidence at transcript level"/>
<accession>Q93PD9</accession>
<accession>Q66A03</accession>
<protein>
    <recommendedName>
        <fullName evidence="1">Undecaprenyl-phosphate 4-deoxy-4-formamido-L-arabinose transferase</fullName>
        <ecNumber evidence="1">2.4.2.53</ecNumber>
    </recommendedName>
    <alternativeName>
        <fullName>Polymyxin resistance protein PmrF</fullName>
    </alternativeName>
    <alternativeName>
        <fullName evidence="1">Undecaprenyl-phosphate Ara4FN transferase</fullName>
        <shortName evidence="1">Ara4FN transferase</shortName>
    </alternativeName>
</protein>
<gene>
    <name evidence="1" type="primary">arnC</name>
    <name type="synonym">pmrF</name>
    <name type="ordered locus">YPTB2329</name>
</gene>
<feature type="chain" id="PRO_0000059207" description="Undecaprenyl-phosphate 4-deoxy-4-formamido-L-arabinose transferase">
    <location>
        <begin position="1"/>
        <end position="327"/>
    </location>
</feature>
<feature type="transmembrane region" description="Helical" evidence="1">
    <location>
        <begin position="235"/>
        <end position="255"/>
    </location>
</feature>
<feature type="transmembrane region" description="Helical" evidence="1">
    <location>
        <begin position="270"/>
        <end position="290"/>
    </location>
</feature>
<sequence>MSLNEPIKKVSIVIPVYNEQESLPALIDRTTAACKLLTQAYEIILVDDGSSDNSTELLTAAANDPDSHIIAILLNRNYGQHSAIMAGFNQVSGDLIITLDADLQNPPEEIPRLVHVAEEGYDVVGTVRANRQDSLFRKTASRMINMMIQRATGKSMGDYGCMLRAYRRHIVEAMLHCHERSTFIPILANTFARRTTEITVHHAEREFGNSKYSLMRLINLMYDLITCLTTTPLRLLSLVGSAIALLGFTFSVLLVALRLIFGPEWAGGGVFTLFAVLFMFIGAQFVGMGLLGEYIGRIYNDVRARPRYFVQKVVGAEQTENNQDVEK</sequence>
<organism>
    <name type="scientific">Yersinia pseudotuberculosis serotype I (strain IP32953)</name>
    <dbReference type="NCBI Taxonomy" id="273123"/>
    <lineage>
        <taxon>Bacteria</taxon>
        <taxon>Pseudomonadati</taxon>
        <taxon>Pseudomonadota</taxon>
        <taxon>Gammaproteobacteria</taxon>
        <taxon>Enterobacterales</taxon>
        <taxon>Yersiniaceae</taxon>
        <taxon>Yersinia</taxon>
    </lineage>
</organism>
<comment type="function">
    <text>Catalyzes the transfer of 4-deoxy-4-formamido-L-arabinose from UDP to undecaprenyl phosphate. The modified arabinose is attached to lipid A and is required for resistance to polymyxin and cationic antimicrobial peptides. Not required for full virulence.</text>
</comment>
<comment type="catalytic activity">
    <reaction evidence="1">
        <text>UDP-4-deoxy-4-formamido-beta-L-arabinose + di-trans,octa-cis-undecaprenyl phosphate = 4-deoxy-4-formamido-alpha-L-arabinopyranosyl di-trans,octa-cis-undecaprenyl phosphate + UDP</text>
        <dbReference type="Rhea" id="RHEA:27722"/>
        <dbReference type="ChEBI" id="CHEBI:58223"/>
        <dbReference type="ChEBI" id="CHEBI:58709"/>
        <dbReference type="ChEBI" id="CHEBI:58909"/>
        <dbReference type="ChEBI" id="CHEBI:60392"/>
        <dbReference type="EC" id="2.4.2.53"/>
    </reaction>
</comment>
<comment type="pathway">
    <text evidence="1">Glycolipid biosynthesis; 4-amino-4-deoxy-alpha-L-arabinose undecaprenyl phosphate biosynthesis; 4-amino-4-deoxy-alpha-L-arabinose undecaprenyl phosphate from UDP-4-deoxy-4-formamido-beta-L-arabinose and undecaprenyl phosphate: step 1/2.</text>
</comment>
<comment type="pathway">
    <text evidence="1">Bacterial outer membrane biogenesis; lipopolysaccharide biosynthesis.</text>
</comment>
<comment type="subcellular location">
    <subcellularLocation>
        <location evidence="1">Cell inner membrane</location>
        <topology evidence="1">Multi-pass membrane protein</topology>
    </subcellularLocation>
</comment>
<comment type="induction">
    <text evidence="2">Activated by low magnesium concentrations, via the two-component regulatory system PhoP/PhoQ.</text>
</comment>
<comment type="similarity">
    <text evidence="1">Belongs to the glycosyltransferase 2 family.</text>
</comment>